<protein>
    <recommendedName>
        <fullName evidence="1">3-methyl-2-oxobutanoate hydroxymethyltransferase</fullName>
        <ecNumber evidence="1">2.1.2.11</ecNumber>
    </recommendedName>
    <alternativeName>
        <fullName evidence="1">Ketopantoate hydroxymethyltransferase</fullName>
        <shortName evidence="1">KPHMT</shortName>
    </alternativeName>
</protein>
<accession>A8FK87</accession>
<comment type="function">
    <text evidence="1">Catalyzes the reversible reaction in which hydroxymethyl group from 5,10-methylenetetrahydrofolate is transferred onto alpha-ketoisovalerate to form ketopantoate.</text>
</comment>
<comment type="catalytic activity">
    <reaction evidence="1">
        <text>3-methyl-2-oxobutanoate + (6R)-5,10-methylene-5,6,7,8-tetrahydrofolate + H2O = 2-dehydropantoate + (6S)-5,6,7,8-tetrahydrofolate</text>
        <dbReference type="Rhea" id="RHEA:11824"/>
        <dbReference type="ChEBI" id="CHEBI:11561"/>
        <dbReference type="ChEBI" id="CHEBI:11851"/>
        <dbReference type="ChEBI" id="CHEBI:15377"/>
        <dbReference type="ChEBI" id="CHEBI:15636"/>
        <dbReference type="ChEBI" id="CHEBI:57453"/>
        <dbReference type="EC" id="2.1.2.11"/>
    </reaction>
</comment>
<comment type="cofactor">
    <cofactor evidence="1">
        <name>Mg(2+)</name>
        <dbReference type="ChEBI" id="CHEBI:18420"/>
    </cofactor>
    <text evidence="1">Binds 1 Mg(2+) ion per subunit.</text>
</comment>
<comment type="pathway">
    <text evidence="1">Cofactor biosynthesis; (R)-pantothenate biosynthesis; (R)-pantoate from 3-methyl-2-oxobutanoate: step 1/2.</text>
</comment>
<comment type="subunit">
    <text evidence="1">Homodecamer; pentamer of dimers.</text>
</comment>
<comment type="subcellular location">
    <subcellularLocation>
        <location evidence="1">Cytoplasm</location>
    </subcellularLocation>
</comment>
<comment type="similarity">
    <text evidence="1">Belongs to the PanB family.</text>
</comment>
<gene>
    <name evidence="1" type="primary">panB</name>
    <name type="ordered locus">C8J_0275</name>
</gene>
<feature type="chain" id="PRO_1000071530" description="3-methyl-2-oxobutanoate hydroxymethyltransferase">
    <location>
        <begin position="1"/>
        <end position="274"/>
    </location>
</feature>
<feature type="active site" description="Proton acceptor" evidence="1">
    <location>
        <position position="182"/>
    </location>
</feature>
<feature type="binding site" evidence="1">
    <location>
        <begin position="44"/>
        <end position="45"/>
    </location>
    <ligand>
        <name>3-methyl-2-oxobutanoate</name>
        <dbReference type="ChEBI" id="CHEBI:11851"/>
    </ligand>
</feature>
<feature type="binding site" evidence="1">
    <location>
        <position position="44"/>
    </location>
    <ligand>
        <name>Mg(2+)</name>
        <dbReference type="ChEBI" id="CHEBI:18420"/>
    </ligand>
</feature>
<feature type="binding site" evidence="1">
    <location>
        <position position="83"/>
    </location>
    <ligand>
        <name>3-methyl-2-oxobutanoate</name>
        <dbReference type="ChEBI" id="CHEBI:11851"/>
    </ligand>
</feature>
<feature type="binding site" evidence="1">
    <location>
        <position position="83"/>
    </location>
    <ligand>
        <name>Mg(2+)</name>
        <dbReference type="ChEBI" id="CHEBI:18420"/>
    </ligand>
</feature>
<feature type="binding site" evidence="1">
    <location>
        <position position="113"/>
    </location>
    <ligand>
        <name>3-methyl-2-oxobutanoate</name>
        <dbReference type="ChEBI" id="CHEBI:11851"/>
    </ligand>
</feature>
<feature type="binding site" evidence="1">
    <location>
        <position position="115"/>
    </location>
    <ligand>
        <name>Mg(2+)</name>
        <dbReference type="ChEBI" id="CHEBI:18420"/>
    </ligand>
</feature>
<sequence>MRKSMISFLEKKAKNEKITMVSAYDYHSARILDNSDIDIILVGDSLAMTVLGMQDTLSVTMDEMLIFTKAVSRGAKKSFVLADMPFMSYQSSDRDAILNASRFIKESHANGVKVEGGIEIASKIKLISQSGIPVVAHLGLTPQAVNMLGGYRVQGKDLQSAQKIIDDAKAVQDAGACMLVLECVPVKLAQKISSILEIPTIGIGSGKYCDGQVLVYHDLLGLNKDFKAKFVKHFDKIDPQVGVEKYRDEVKSGIFPSQEHSFDYLDDELLDKLY</sequence>
<name>PANB_CAMJ8</name>
<proteinExistence type="inferred from homology"/>
<evidence type="ECO:0000255" key="1">
    <source>
        <dbReference type="HAMAP-Rule" id="MF_00156"/>
    </source>
</evidence>
<keyword id="KW-0963">Cytoplasm</keyword>
<keyword id="KW-0460">Magnesium</keyword>
<keyword id="KW-0479">Metal-binding</keyword>
<keyword id="KW-0566">Pantothenate biosynthesis</keyword>
<keyword id="KW-0808">Transferase</keyword>
<dbReference type="EC" id="2.1.2.11" evidence="1"/>
<dbReference type="EMBL" id="CP000814">
    <property type="protein sequence ID" value="ABV51874.1"/>
    <property type="molecule type" value="Genomic_DNA"/>
</dbReference>
<dbReference type="RefSeq" id="WP_002783229.1">
    <property type="nucleotide sequence ID" value="NC_009839.1"/>
</dbReference>
<dbReference type="SMR" id="A8FK87"/>
<dbReference type="KEGG" id="cju:C8J_0275"/>
<dbReference type="HOGENOM" id="CLU_036645_1_0_7"/>
<dbReference type="UniPathway" id="UPA00028">
    <property type="reaction ID" value="UER00003"/>
</dbReference>
<dbReference type="GO" id="GO:0005737">
    <property type="term" value="C:cytoplasm"/>
    <property type="evidence" value="ECO:0007669"/>
    <property type="project" value="UniProtKB-SubCell"/>
</dbReference>
<dbReference type="GO" id="GO:0003864">
    <property type="term" value="F:3-methyl-2-oxobutanoate hydroxymethyltransferase activity"/>
    <property type="evidence" value="ECO:0007669"/>
    <property type="project" value="UniProtKB-UniRule"/>
</dbReference>
<dbReference type="GO" id="GO:0000287">
    <property type="term" value="F:magnesium ion binding"/>
    <property type="evidence" value="ECO:0007669"/>
    <property type="project" value="TreeGrafter"/>
</dbReference>
<dbReference type="GO" id="GO:0015940">
    <property type="term" value="P:pantothenate biosynthetic process"/>
    <property type="evidence" value="ECO:0007669"/>
    <property type="project" value="UniProtKB-UniRule"/>
</dbReference>
<dbReference type="CDD" id="cd06557">
    <property type="entry name" value="KPHMT-like"/>
    <property type="match status" value="1"/>
</dbReference>
<dbReference type="FunFam" id="3.20.20.60:FF:000003">
    <property type="entry name" value="3-methyl-2-oxobutanoate hydroxymethyltransferase"/>
    <property type="match status" value="1"/>
</dbReference>
<dbReference type="Gene3D" id="3.20.20.60">
    <property type="entry name" value="Phosphoenolpyruvate-binding domains"/>
    <property type="match status" value="1"/>
</dbReference>
<dbReference type="HAMAP" id="MF_00156">
    <property type="entry name" value="PanB"/>
    <property type="match status" value="1"/>
</dbReference>
<dbReference type="InterPro" id="IPR003700">
    <property type="entry name" value="Pantoate_hydroxy_MeTrfase"/>
</dbReference>
<dbReference type="InterPro" id="IPR015813">
    <property type="entry name" value="Pyrv/PenolPyrv_kinase-like_dom"/>
</dbReference>
<dbReference type="InterPro" id="IPR040442">
    <property type="entry name" value="Pyrv_kinase-like_dom_sf"/>
</dbReference>
<dbReference type="NCBIfam" id="TIGR00222">
    <property type="entry name" value="panB"/>
    <property type="match status" value="1"/>
</dbReference>
<dbReference type="NCBIfam" id="NF001452">
    <property type="entry name" value="PRK00311.1"/>
    <property type="match status" value="1"/>
</dbReference>
<dbReference type="PANTHER" id="PTHR20881">
    <property type="entry name" value="3-METHYL-2-OXOBUTANOATE HYDROXYMETHYLTRANSFERASE"/>
    <property type="match status" value="1"/>
</dbReference>
<dbReference type="PANTHER" id="PTHR20881:SF0">
    <property type="entry name" value="3-METHYL-2-OXOBUTANOATE HYDROXYMETHYLTRANSFERASE"/>
    <property type="match status" value="1"/>
</dbReference>
<dbReference type="Pfam" id="PF02548">
    <property type="entry name" value="Pantoate_transf"/>
    <property type="match status" value="1"/>
</dbReference>
<dbReference type="PIRSF" id="PIRSF000388">
    <property type="entry name" value="Pantoate_hydroxy_MeTrfase"/>
    <property type="match status" value="1"/>
</dbReference>
<dbReference type="SUPFAM" id="SSF51621">
    <property type="entry name" value="Phosphoenolpyruvate/pyruvate domain"/>
    <property type="match status" value="1"/>
</dbReference>
<organism>
    <name type="scientific">Campylobacter jejuni subsp. jejuni serotype O:6 (strain 81116 / NCTC 11828)</name>
    <dbReference type="NCBI Taxonomy" id="407148"/>
    <lineage>
        <taxon>Bacteria</taxon>
        <taxon>Pseudomonadati</taxon>
        <taxon>Campylobacterota</taxon>
        <taxon>Epsilonproteobacteria</taxon>
        <taxon>Campylobacterales</taxon>
        <taxon>Campylobacteraceae</taxon>
        <taxon>Campylobacter</taxon>
    </lineage>
</organism>
<reference key="1">
    <citation type="journal article" date="2007" name="J. Bacteriol.">
        <title>The complete genome sequence of Campylobacter jejuni strain 81116 (NCTC11828).</title>
        <authorList>
            <person name="Pearson B.M."/>
            <person name="Gaskin D.J.H."/>
            <person name="Segers R.P.A.M."/>
            <person name="Wells J.M."/>
            <person name="Nuijten P.J.M."/>
            <person name="van Vliet A.H.M."/>
        </authorList>
    </citation>
    <scope>NUCLEOTIDE SEQUENCE [LARGE SCALE GENOMIC DNA]</scope>
    <source>
        <strain>81116 / NCTC 11828</strain>
    </source>
</reference>